<dbReference type="EMBL" id="AF141204">
    <property type="protein sequence ID" value="AAD41078.1"/>
    <property type="molecule type" value="mRNA"/>
</dbReference>
<dbReference type="EMBL" id="AC079677">
    <property type="protein sequence ID" value="AAG52643.1"/>
    <property type="molecule type" value="Genomic_DNA"/>
</dbReference>
<dbReference type="EMBL" id="CP002684">
    <property type="protein sequence ID" value="AEE32142.1"/>
    <property type="molecule type" value="Genomic_DNA"/>
</dbReference>
<dbReference type="EMBL" id="AF410320">
    <property type="protein sequence ID" value="AAK95306.1"/>
    <property type="molecule type" value="mRNA"/>
</dbReference>
<dbReference type="EMBL" id="AY102128">
    <property type="protein sequence ID" value="AAM26695.1"/>
    <property type="molecule type" value="mRNA"/>
</dbReference>
<dbReference type="PIR" id="B96513">
    <property type="entry name" value="B96513"/>
</dbReference>
<dbReference type="RefSeq" id="NP_175157.1">
    <property type="nucleotide sequence ID" value="NM_103618.3"/>
</dbReference>
<dbReference type="SMR" id="Q9C6B2"/>
<dbReference type="BioGRID" id="26352">
    <property type="interactions" value="18"/>
</dbReference>
<dbReference type="FunCoup" id="Q9C6B2">
    <property type="interactions" value="3124"/>
</dbReference>
<dbReference type="IntAct" id="Q9C6B2">
    <property type="interactions" value="11"/>
</dbReference>
<dbReference type="STRING" id="3702.Q9C6B2"/>
<dbReference type="PaxDb" id="3702-AT1G47240.1"/>
<dbReference type="ProteomicsDB" id="239055"/>
<dbReference type="EnsemblPlants" id="AT1G47240.1">
    <property type="protein sequence ID" value="AT1G47240.1"/>
    <property type="gene ID" value="AT1G47240"/>
</dbReference>
<dbReference type="GeneID" id="841127"/>
<dbReference type="Gramene" id="AT1G47240.1">
    <property type="protein sequence ID" value="AT1G47240.1"/>
    <property type="gene ID" value="AT1G47240"/>
</dbReference>
<dbReference type="KEGG" id="ath:AT1G47240"/>
<dbReference type="Araport" id="AT1G47240"/>
<dbReference type="TAIR" id="AT1G47240">
    <property type="gene designation" value="NRAMP2"/>
</dbReference>
<dbReference type="eggNOG" id="KOG1291">
    <property type="taxonomic scope" value="Eukaryota"/>
</dbReference>
<dbReference type="HOGENOM" id="CLU_020088_5_1_1"/>
<dbReference type="InParanoid" id="Q9C6B2"/>
<dbReference type="OMA" id="PWMQFYQ"/>
<dbReference type="PhylomeDB" id="Q9C6B2"/>
<dbReference type="PRO" id="PR:Q9C6B2"/>
<dbReference type="Proteomes" id="UP000006548">
    <property type="component" value="Chromosome 1"/>
</dbReference>
<dbReference type="ExpressionAtlas" id="Q9C6B2">
    <property type="expression patterns" value="baseline and differential"/>
</dbReference>
<dbReference type="GO" id="GO:0016020">
    <property type="term" value="C:membrane"/>
    <property type="evidence" value="ECO:0007669"/>
    <property type="project" value="UniProtKB-SubCell"/>
</dbReference>
<dbReference type="GO" id="GO:0005802">
    <property type="term" value="C:trans-Golgi network"/>
    <property type="evidence" value="ECO:0000314"/>
    <property type="project" value="TAIR"/>
</dbReference>
<dbReference type="GO" id="GO:0005384">
    <property type="term" value="F:manganese ion transmembrane transporter activity"/>
    <property type="evidence" value="ECO:0000314"/>
    <property type="project" value="TAIR"/>
</dbReference>
<dbReference type="GO" id="GO:0071287">
    <property type="term" value="P:cellular response to manganese ion"/>
    <property type="evidence" value="ECO:0000315"/>
    <property type="project" value="TAIR"/>
</dbReference>
<dbReference type="GO" id="GO:0006826">
    <property type="term" value="P:iron ion transport"/>
    <property type="evidence" value="ECO:0007669"/>
    <property type="project" value="UniProtKB-KW"/>
</dbReference>
<dbReference type="GO" id="GO:0071421">
    <property type="term" value="P:manganese ion transmembrane transport"/>
    <property type="evidence" value="ECO:0000314"/>
    <property type="project" value="TAIR"/>
</dbReference>
<dbReference type="GO" id="GO:0006828">
    <property type="term" value="P:manganese ion transport"/>
    <property type="evidence" value="ECO:0000315"/>
    <property type="project" value="TAIR"/>
</dbReference>
<dbReference type="GO" id="GO:0051512">
    <property type="term" value="P:positive regulation of unidimensional cell growth"/>
    <property type="evidence" value="ECO:0000316"/>
    <property type="project" value="TAIR"/>
</dbReference>
<dbReference type="GO" id="GO:0048767">
    <property type="term" value="P:root hair elongation"/>
    <property type="evidence" value="ECO:0000316"/>
    <property type="project" value="TAIR"/>
</dbReference>
<dbReference type="GO" id="GO:0010015">
    <property type="term" value="P:root morphogenesis"/>
    <property type="evidence" value="ECO:0000316"/>
    <property type="project" value="TAIR"/>
</dbReference>
<dbReference type="HAMAP" id="MF_00221">
    <property type="entry name" value="NRAMP"/>
    <property type="match status" value="1"/>
</dbReference>
<dbReference type="InterPro" id="IPR001046">
    <property type="entry name" value="NRAMP_fam"/>
</dbReference>
<dbReference type="NCBIfam" id="TIGR01197">
    <property type="entry name" value="nramp"/>
    <property type="match status" value="1"/>
</dbReference>
<dbReference type="NCBIfam" id="NF037982">
    <property type="entry name" value="Nramp_1"/>
    <property type="match status" value="1"/>
</dbReference>
<dbReference type="PANTHER" id="PTHR11706:SF104">
    <property type="entry name" value="METAL TRANSPORTER NRAMP2"/>
    <property type="match status" value="1"/>
</dbReference>
<dbReference type="PANTHER" id="PTHR11706">
    <property type="entry name" value="SOLUTE CARRIER PROTEIN FAMILY 11 MEMBER"/>
    <property type="match status" value="1"/>
</dbReference>
<dbReference type="Pfam" id="PF01566">
    <property type="entry name" value="Nramp"/>
    <property type="match status" value="1"/>
</dbReference>
<dbReference type="PRINTS" id="PR00447">
    <property type="entry name" value="NATRESASSCMP"/>
</dbReference>
<reference key="1">
    <citation type="journal article" date="1999" name="Science">
        <title>EIN2, a bifunctional transducer of ethylene and stress responses in Arabidopsis.</title>
        <authorList>
            <person name="Alonso J.M."/>
            <person name="Hirayama T."/>
            <person name="Roman G."/>
            <person name="Nourizadeh S."/>
            <person name="Ecker J.R."/>
        </authorList>
    </citation>
    <scope>NUCLEOTIDE SEQUENCE [MRNA]</scope>
</reference>
<reference key="2">
    <citation type="journal article" date="2000" name="Nature">
        <title>Sequence and analysis of chromosome 1 of the plant Arabidopsis thaliana.</title>
        <authorList>
            <person name="Theologis A."/>
            <person name="Ecker J.R."/>
            <person name="Palm C.J."/>
            <person name="Federspiel N.A."/>
            <person name="Kaul S."/>
            <person name="White O."/>
            <person name="Alonso J."/>
            <person name="Altafi H."/>
            <person name="Araujo R."/>
            <person name="Bowman C.L."/>
            <person name="Brooks S.Y."/>
            <person name="Buehler E."/>
            <person name="Chan A."/>
            <person name="Chao Q."/>
            <person name="Chen H."/>
            <person name="Cheuk R.F."/>
            <person name="Chin C.W."/>
            <person name="Chung M.K."/>
            <person name="Conn L."/>
            <person name="Conway A.B."/>
            <person name="Conway A.R."/>
            <person name="Creasy T.H."/>
            <person name="Dewar K."/>
            <person name="Dunn P."/>
            <person name="Etgu P."/>
            <person name="Feldblyum T.V."/>
            <person name="Feng J.-D."/>
            <person name="Fong B."/>
            <person name="Fujii C.Y."/>
            <person name="Gill J.E."/>
            <person name="Goldsmith A.D."/>
            <person name="Haas B."/>
            <person name="Hansen N.F."/>
            <person name="Hughes B."/>
            <person name="Huizar L."/>
            <person name="Hunter J.L."/>
            <person name="Jenkins J."/>
            <person name="Johnson-Hopson C."/>
            <person name="Khan S."/>
            <person name="Khaykin E."/>
            <person name="Kim C.J."/>
            <person name="Koo H.L."/>
            <person name="Kremenetskaia I."/>
            <person name="Kurtz D.B."/>
            <person name="Kwan A."/>
            <person name="Lam B."/>
            <person name="Langin-Hooper S."/>
            <person name="Lee A."/>
            <person name="Lee J.M."/>
            <person name="Lenz C.A."/>
            <person name="Li J.H."/>
            <person name="Li Y.-P."/>
            <person name="Lin X."/>
            <person name="Liu S.X."/>
            <person name="Liu Z.A."/>
            <person name="Luros J.S."/>
            <person name="Maiti R."/>
            <person name="Marziali A."/>
            <person name="Militscher J."/>
            <person name="Miranda M."/>
            <person name="Nguyen M."/>
            <person name="Nierman W.C."/>
            <person name="Osborne B.I."/>
            <person name="Pai G."/>
            <person name="Peterson J."/>
            <person name="Pham P.K."/>
            <person name="Rizzo M."/>
            <person name="Rooney T."/>
            <person name="Rowley D."/>
            <person name="Sakano H."/>
            <person name="Salzberg S.L."/>
            <person name="Schwartz J.R."/>
            <person name="Shinn P."/>
            <person name="Southwick A.M."/>
            <person name="Sun H."/>
            <person name="Tallon L.J."/>
            <person name="Tambunga G."/>
            <person name="Toriumi M.J."/>
            <person name="Town C.D."/>
            <person name="Utterback T."/>
            <person name="Van Aken S."/>
            <person name="Vaysberg M."/>
            <person name="Vysotskaia V.S."/>
            <person name="Walker M."/>
            <person name="Wu D."/>
            <person name="Yu G."/>
            <person name="Fraser C.M."/>
            <person name="Venter J.C."/>
            <person name="Davis R.W."/>
        </authorList>
    </citation>
    <scope>NUCLEOTIDE SEQUENCE [LARGE SCALE GENOMIC DNA]</scope>
    <source>
        <strain>cv. Columbia</strain>
    </source>
</reference>
<reference key="3">
    <citation type="journal article" date="2017" name="Plant J.">
        <title>Araport11: a complete reannotation of the Arabidopsis thaliana reference genome.</title>
        <authorList>
            <person name="Cheng C.Y."/>
            <person name="Krishnakumar V."/>
            <person name="Chan A.P."/>
            <person name="Thibaud-Nissen F."/>
            <person name="Schobel S."/>
            <person name="Town C.D."/>
        </authorList>
    </citation>
    <scope>GENOME REANNOTATION</scope>
    <source>
        <strain>cv. Columbia</strain>
    </source>
</reference>
<reference key="4">
    <citation type="journal article" date="2003" name="Science">
        <title>Empirical analysis of transcriptional activity in the Arabidopsis genome.</title>
        <authorList>
            <person name="Yamada K."/>
            <person name="Lim J."/>
            <person name="Dale J.M."/>
            <person name="Chen H."/>
            <person name="Shinn P."/>
            <person name="Palm C.J."/>
            <person name="Southwick A.M."/>
            <person name="Wu H.C."/>
            <person name="Kim C.J."/>
            <person name="Nguyen M."/>
            <person name="Pham P.K."/>
            <person name="Cheuk R.F."/>
            <person name="Karlin-Newmann G."/>
            <person name="Liu S.X."/>
            <person name="Lam B."/>
            <person name="Sakano H."/>
            <person name="Wu T."/>
            <person name="Yu G."/>
            <person name="Miranda M."/>
            <person name="Quach H.L."/>
            <person name="Tripp M."/>
            <person name="Chang C.H."/>
            <person name="Lee J.M."/>
            <person name="Toriumi M.J."/>
            <person name="Chan M.M."/>
            <person name="Tang C.C."/>
            <person name="Onodera C.S."/>
            <person name="Deng J.M."/>
            <person name="Akiyama K."/>
            <person name="Ansari Y."/>
            <person name="Arakawa T."/>
            <person name="Banh J."/>
            <person name="Banno F."/>
            <person name="Bowser L."/>
            <person name="Brooks S.Y."/>
            <person name="Carninci P."/>
            <person name="Chao Q."/>
            <person name="Choy N."/>
            <person name="Enju A."/>
            <person name="Goldsmith A.D."/>
            <person name="Gurjal M."/>
            <person name="Hansen N.F."/>
            <person name="Hayashizaki Y."/>
            <person name="Johnson-Hopson C."/>
            <person name="Hsuan V.W."/>
            <person name="Iida K."/>
            <person name="Karnes M."/>
            <person name="Khan S."/>
            <person name="Koesema E."/>
            <person name="Ishida J."/>
            <person name="Jiang P.X."/>
            <person name="Jones T."/>
            <person name="Kawai J."/>
            <person name="Kamiya A."/>
            <person name="Meyers C."/>
            <person name="Nakajima M."/>
            <person name="Narusaka M."/>
            <person name="Seki M."/>
            <person name="Sakurai T."/>
            <person name="Satou M."/>
            <person name="Tamse R."/>
            <person name="Vaysberg M."/>
            <person name="Wallender E.K."/>
            <person name="Wong C."/>
            <person name="Yamamura Y."/>
            <person name="Yuan S."/>
            <person name="Shinozaki K."/>
            <person name="Davis R.W."/>
            <person name="Theologis A."/>
            <person name="Ecker J.R."/>
        </authorList>
    </citation>
    <scope>NUCLEOTIDE SEQUENCE [LARGE SCALE MRNA]</scope>
    <source>
        <strain>cv. Columbia</strain>
    </source>
</reference>
<evidence type="ECO:0000250" key="1"/>
<evidence type="ECO:0000255" key="2"/>
<evidence type="ECO:0000256" key="3">
    <source>
        <dbReference type="SAM" id="MobiDB-lite"/>
    </source>
</evidence>
<evidence type="ECO:0000305" key="4"/>
<sequence length="530" mass="58417">MENDVKENLEEEEDRLLPPPPPSQSLPSTDSESEAAFETNEKILIVDFESPDDPTTGDTPPPFSWRKLWLFTGPGFLMSIAFLDPGNLEGDLQAGAIAGYSLLWLLMWATAMGLLIQMLSARVGVATGRHLAELCRDEYPTWARYVLWSMAELALIGADIQEVIGSAIAIQILSRGFLPLWAGVVITASDCFLFLFLENYGVRKLEAVFAVLIATMGLSFAWMFGETKPSGKELMIGILLPRLSSKTIRQAVGVVGCVIMPHNVFLHSALVQSRKIDPKRKSRVQEALNYYLIESSVALFISFMINLFVTTVFAKGFYGTEKANNIGLVNAGQYLQEKFGGGLLPILYIWGIGLLAAGQSSTITGTYAGQFIMGGFLNLRLKKWMRAVITRSCAIVPTMIVAIVFNTSEASLDVLNEWLNVLQSVQIPFALLPLLTLVSKEEIMGDFKIGPILQRIAWTVAALVMIINGYLLLDFFVSEVDGFLFGVTVCVWTTAYIAFIVYLISHSNFFPSPWSSSSIELPKRVSVSNS</sequence>
<comment type="function">
    <text evidence="1">Seems to be involved in iron uptake.</text>
</comment>
<comment type="subcellular location">
    <subcellularLocation>
        <location evidence="4">Membrane</location>
        <topology evidence="4">Multi-pass membrane protein</topology>
    </subcellularLocation>
</comment>
<comment type="similarity">
    <text evidence="4">Belongs to the NRAMP (TC 2.A.55) family.</text>
</comment>
<accession>Q9C6B2</accession>
<accession>Q9XH62</accession>
<keyword id="KW-0406">Ion transport</keyword>
<keyword id="KW-0408">Iron</keyword>
<keyword id="KW-0410">Iron transport</keyword>
<keyword id="KW-0472">Membrane</keyword>
<keyword id="KW-1185">Reference proteome</keyword>
<keyword id="KW-0812">Transmembrane</keyword>
<keyword id="KW-1133">Transmembrane helix</keyword>
<keyword id="KW-0813">Transport</keyword>
<proteinExistence type="evidence at transcript level"/>
<gene>
    <name type="primary">NRAMP2</name>
    <name type="ordered locus">At1g47240</name>
    <name type="ORF">F8G22.4</name>
</gene>
<protein>
    <recommendedName>
        <fullName>Metal transporter Nramp2</fullName>
        <shortName>AtNramp2</shortName>
    </recommendedName>
</protein>
<feature type="chain" id="PRO_0000212599" description="Metal transporter Nramp2">
    <location>
        <begin position="1"/>
        <end position="530"/>
    </location>
</feature>
<feature type="transmembrane region" description="Helical" evidence="2">
    <location>
        <begin position="68"/>
        <end position="88"/>
    </location>
</feature>
<feature type="transmembrane region" description="Helical" evidence="2">
    <location>
        <begin position="96"/>
        <end position="116"/>
    </location>
</feature>
<feature type="transmembrane region" description="Helical" evidence="2">
    <location>
        <begin position="153"/>
        <end position="173"/>
    </location>
</feature>
<feature type="transmembrane region" description="Helical" evidence="2">
    <location>
        <begin position="177"/>
        <end position="197"/>
    </location>
</feature>
<feature type="transmembrane region" description="Helical" evidence="2">
    <location>
        <begin position="205"/>
        <end position="225"/>
    </location>
</feature>
<feature type="transmembrane region" description="Helical" evidence="2">
    <location>
        <begin position="251"/>
        <end position="271"/>
    </location>
</feature>
<feature type="transmembrane region" description="Helical" evidence="2">
    <location>
        <begin position="297"/>
        <end position="317"/>
    </location>
</feature>
<feature type="transmembrane region" description="Helical" evidence="2">
    <location>
        <begin position="339"/>
        <end position="359"/>
    </location>
</feature>
<feature type="transmembrane region" description="Helical" evidence="2">
    <location>
        <begin position="395"/>
        <end position="415"/>
    </location>
</feature>
<feature type="transmembrane region" description="Helical" evidence="2">
    <location>
        <begin position="418"/>
        <end position="438"/>
    </location>
</feature>
<feature type="transmembrane region" description="Helical" evidence="2">
    <location>
        <begin position="456"/>
        <end position="476"/>
    </location>
</feature>
<feature type="transmembrane region" description="Helical" evidence="2">
    <location>
        <begin position="484"/>
        <end position="504"/>
    </location>
</feature>
<feature type="region of interest" description="Disordered" evidence="3">
    <location>
        <begin position="1"/>
        <end position="35"/>
    </location>
</feature>
<feature type="sequence conflict" description="In Ref. 1; AAD41078." evidence="4" ref="1">
    <original>K</original>
    <variation>R</variation>
    <location>
        <position position="315"/>
    </location>
</feature>
<feature type="sequence conflict" description="In Ref. 1; AAD41078." evidence="4" ref="1">
    <original>F</original>
    <variation>L</variation>
    <location>
        <position position="405"/>
    </location>
</feature>
<feature type="sequence conflict" description="In Ref. 1; AAD41078." evidence="4" ref="1">
    <original>E</original>
    <variation>V</variation>
    <location>
        <position position="409"/>
    </location>
</feature>
<feature type="sequence conflict" description="In Ref. 1; AAD41078." evidence="4" ref="1">
    <original>D</original>
    <variation>V</variation>
    <location>
        <position position="446"/>
    </location>
</feature>
<name>NRAM2_ARATH</name>
<organism>
    <name type="scientific">Arabidopsis thaliana</name>
    <name type="common">Mouse-ear cress</name>
    <dbReference type="NCBI Taxonomy" id="3702"/>
    <lineage>
        <taxon>Eukaryota</taxon>
        <taxon>Viridiplantae</taxon>
        <taxon>Streptophyta</taxon>
        <taxon>Embryophyta</taxon>
        <taxon>Tracheophyta</taxon>
        <taxon>Spermatophyta</taxon>
        <taxon>Magnoliopsida</taxon>
        <taxon>eudicotyledons</taxon>
        <taxon>Gunneridae</taxon>
        <taxon>Pentapetalae</taxon>
        <taxon>rosids</taxon>
        <taxon>malvids</taxon>
        <taxon>Brassicales</taxon>
        <taxon>Brassicaceae</taxon>
        <taxon>Camelineae</taxon>
        <taxon>Arabidopsis</taxon>
    </lineage>
</organism>